<reference key="1">
    <citation type="journal article" date="2003" name="Proc. Natl. Acad. Sci. U.S.A.">
        <title>The complete genome sequence of Chromobacterium violaceum reveals remarkable and exploitable bacterial adaptability.</title>
        <authorList>
            <person name="Vasconcelos A.T.R."/>
            <person name="de Almeida D.F."/>
            <person name="Hungria M."/>
            <person name="Guimaraes C.T."/>
            <person name="Antonio R.V."/>
            <person name="Almeida F.C."/>
            <person name="de Almeida L.G.P."/>
            <person name="de Almeida R."/>
            <person name="Alves-Gomes J.A."/>
            <person name="Andrade E.M."/>
            <person name="Araripe J."/>
            <person name="de Araujo M.F.F."/>
            <person name="Astolfi-Filho S."/>
            <person name="Azevedo V."/>
            <person name="Baptista A.J."/>
            <person name="Bataus L.A.M."/>
            <person name="Batista J.S."/>
            <person name="Belo A."/>
            <person name="van den Berg C."/>
            <person name="Bogo M."/>
            <person name="Bonatto S."/>
            <person name="Bordignon J."/>
            <person name="Brigido M.M."/>
            <person name="Brito C.A."/>
            <person name="Brocchi M."/>
            <person name="Burity H.A."/>
            <person name="Camargo A.A."/>
            <person name="Cardoso D.D.P."/>
            <person name="Carneiro N.P."/>
            <person name="Carraro D.M."/>
            <person name="Carvalho C.M.B."/>
            <person name="Cascardo J.C.M."/>
            <person name="Cavada B.S."/>
            <person name="Chueire L.M.O."/>
            <person name="Creczynski-Pasa T.B."/>
            <person name="Cunha-Junior N.C."/>
            <person name="Fagundes N."/>
            <person name="Falcao C.L."/>
            <person name="Fantinatti F."/>
            <person name="Farias I.P."/>
            <person name="Felipe M.S.S."/>
            <person name="Ferrari L.P."/>
            <person name="Ferro J.A."/>
            <person name="Ferro M.I.T."/>
            <person name="Franco G.R."/>
            <person name="Freitas N.S.A."/>
            <person name="Furlan L.R."/>
            <person name="Gazzinelli R.T."/>
            <person name="Gomes E.A."/>
            <person name="Goncalves P.R."/>
            <person name="Grangeiro T.B."/>
            <person name="Grattapaglia D."/>
            <person name="Grisard E.C."/>
            <person name="Hanna E.S."/>
            <person name="Jardim S.N."/>
            <person name="Laurino J."/>
            <person name="Leoi L.C.T."/>
            <person name="Lima L.F.A."/>
            <person name="Loureiro M.F."/>
            <person name="Lyra M.C.C.P."/>
            <person name="Madeira H.M.F."/>
            <person name="Manfio G.P."/>
            <person name="Maranhao A.Q."/>
            <person name="Martins W.S."/>
            <person name="di Mauro S.M.Z."/>
            <person name="de Medeiros S.R.B."/>
            <person name="Meissner R.V."/>
            <person name="Moreira M.A.M."/>
            <person name="Nascimento F.F."/>
            <person name="Nicolas M.F."/>
            <person name="Oliveira J.G."/>
            <person name="Oliveira S.C."/>
            <person name="Paixao R.F.C."/>
            <person name="Parente J.A."/>
            <person name="Pedrosa F.O."/>
            <person name="Pena S.D.J."/>
            <person name="Pereira J.O."/>
            <person name="Pereira M."/>
            <person name="Pinto L.S.R.C."/>
            <person name="Pinto L.S."/>
            <person name="Porto J.I.R."/>
            <person name="Potrich D.P."/>
            <person name="Ramalho-Neto C.E."/>
            <person name="Reis A.M.M."/>
            <person name="Rigo L.U."/>
            <person name="Rondinelli E."/>
            <person name="Santos E.B.P."/>
            <person name="Santos F.R."/>
            <person name="Schneider M.P.C."/>
            <person name="Seuanez H.N."/>
            <person name="Silva A.M.R."/>
            <person name="da Silva A.L.C."/>
            <person name="Silva D.W."/>
            <person name="Silva R."/>
            <person name="Simoes I.C."/>
            <person name="Simon D."/>
            <person name="Soares C.M.A."/>
            <person name="Soares R.B.A."/>
            <person name="Souza E.M."/>
            <person name="Souza K.R.L."/>
            <person name="Souza R.C."/>
            <person name="Steffens M.B.R."/>
            <person name="Steindel M."/>
            <person name="Teixeira S.R."/>
            <person name="Urmenyi T."/>
            <person name="Vettore A."/>
            <person name="Wassem R."/>
            <person name="Zaha A."/>
            <person name="Simpson A.J.G."/>
        </authorList>
    </citation>
    <scope>NUCLEOTIDE SEQUENCE [LARGE SCALE GENOMIC DNA]</scope>
    <source>
        <strain>ATCC 12472 / DSM 30191 / JCM 1249 / CCUG 213 / NBRC 12614 / NCIMB 9131 / NCTC 9757 / MK</strain>
    </source>
</reference>
<name>DTPA_CHRVO</name>
<accession>Q7NRM5</accession>
<proteinExistence type="inferred from homology"/>
<feature type="chain" id="PRO_0000395172" description="Dipeptide and tripeptide permease A">
    <location>
        <begin position="1"/>
        <end position="495"/>
    </location>
</feature>
<feature type="topological domain" description="Cytoplasmic" evidence="1">
    <location>
        <begin position="1"/>
        <end position="20"/>
    </location>
</feature>
<feature type="transmembrane region" description="Helical" evidence="1">
    <location>
        <begin position="21"/>
        <end position="41"/>
    </location>
</feature>
<feature type="topological domain" description="Periplasmic" evidence="1">
    <location>
        <begin position="42"/>
        <end position="51"/>
    </location>
</feature>
<feature type="transmembrane region" description="Helical" evidence="1">
    <location>
        <begin position="52"/>
        <end position="72"/>
    </location>
</feature>
<feature type="topological domain" description="Cytoplasmic" evidence="1">
    <location>
        <begin position="73"/>
        <end position="81"/>
    </location>
</feature>
<feature type="transmembrane region" description="Helical" evidence="1">
    <location>
        <begin position="82"/>
        <end position="102"/>
    </location>
</feature>
<feature type="transmembrane region" description="Helical" evidence="1">
    <location>
        <begin position="103"/>
        <end position="123"/>
    </location>
</feature>
<feature type="topological domain" description="Periplasmic" evidence="1">
    <location>
        <begin position="124"/>
        <end position="145"/>
    </location>
</feature>
<feature type="transmembrane region" description="Helical" evidence="1">
    <location>
        <begin position="146"/>
        <end position="166"/>
    </location>
</feature>
<feature type="topological domain" description="Cytoplasmic" evidence="1">
    <location>
        <begin position="167"/>
        <end position="171"/>
    </location>
</feature>
<feature type="transmembrane region" description="Helical" evidence="1">
    <location>
        <begin position="172"/>
        <end position="192"/>
    </location>
</feature>
<feature type="topological domain" description="Periplasmic" evidence="1">
    <location>
        <begin position="193"/>
        <end position="209"/>
    </location>
</feature>
<feature type="transmembrane region" description="Helical" evidence="1">
    <location>
        <begin position="210"/>
        <end position="230"/>
    </location>
</feature>
<feature type="topological domain" description="Cytoplasmic" evidence="1">
    <location>
        <begin position="231"/>
        <end position="232"/>
    </location>
</feature>
<feature type="transmembrane region" description="Helical" evidence="1">
    <location>
        <begin position="233"/>
        <end position="253"/>
    </location>
</feature>
<feature type="topological domain" description="Periplasmic" evidence="1">
    <location>
        <begin position="254"/>
        <end position="266"/>
    </location>
</feature>
<feature type="transmembrane region" description="Helical" evidence="1">
    <location>
        <begin position="267"/>
        <end position="287"/>
    </location>
</feature>
<feature type="topological domain" description="Cytoplasmic" evidence="1">
    <location>
        <begin position="288"/>
        <end position="312"/>
    </location>
</feature>
<feature type="transmembrane region" description="Helical" evidence="1">
    <location>
        <begin position="313"/>
        <end position="333"/>
    </location>
</feature>
<feature type="topological domain" description="Periplasmic" evidence="1">
    <location>
        <begin position="334"/>
        <end position="344"/>
    </location>
</feature>
<feature type="transmembrane region" description="Helical" evidence="1">
    <location>
        <begin position="345"/>
        <end position="365"/>
    </location>
</feature>
<feature type="topological domain" description="Cytoplasmic" evidence="1">
    <location>
        <begin position="366"/>
        <end position="375"/>
    </location>
</feature>
<feature type="transmembrane region" description="Helical" evidence="1">
    <location>
        <begin position="376"/>
        <end position="396"/>
    </location>
</feature>
<feature type="topological domain" description="Periplasmic" evidence="1">
    <location>
        <begin position="397"/>
        <end position="409"/>
    </location>
</feature>
<feature type="transmembrane region" description="Helical" evidence="1">
    <location>
        <begin position="410"/>
        <end position="430"/>
    </location>
</feature>
<feature type="topological domain" description="Cytoplasmic" evidence="1">
    <location>
        <begin position="431"/>
        <end position="451"/>
    </location>
</feature>
<feature type="transmembrane region" description="Helical" evidence="1">
    <location>
        <begin position="452"/>
        <end position="472"/>
    </location>
</feature>
<feature type="topological domain" description="Periplasmic" evidence="1">
    <location>
        <begin position="473"/>
        <end position="495"/>
    </location>
</feature>
<organism>
    <name type="scientific">Chromobacterium violaceum (strain ATCC 12472 / DSM 30191 / JCM 1249 / CCUG 213 / NBRC 12614 / NCIMB 9131 / NCTC 9757 / MK)</name>
    <dbReference type="NCBI Taxonomy" id="243365"/>
    <lineage>
        <taxon>Bacteria</taxon>
        <taxon>Pseudomonadati</taxon>
        <taxon>Pseudomonadota</taxon>
        <taxon>Betaproteobacteria</taxon>
        <taxon>Neisseriales</taxon>
        <taxon>Chromobacteriaceae</taxon>
        <taxon>Chromobacterium</taxon>
    </lineage>
</organism>
<dbReference type="EMBL" id="AE016825">
    <property type="protein sequence ID" value="AAQ61417.1"/>
    <property type="molecule type" value="Genomic_DNA"/>
</dbReference>
<dbReference type="RefSeq" id="WP_011137302.1">
    <property type="nucleotide sequence ID" value="NC_005085.1"/>
</dbReference>
<dbReference type="SMR" id="Q7NRM5"/>
<dbReference type="STRING" id="243365.CV_3755"/>
<dbReference type="KEGG" id="cvi:CV_3755"/>
<dbReference type="eggNOG" id="COG3104">
    <property type="taxonomic scope" value="Bacteria"/>
</dbReference>
<dbReference type="HOGENOM" id="CLU_004790_0_0_4"/>
<dbReference type="OrthoDB" id="9772725at2"/>
<dbReference type="Proteomes" id="UP000001424">
    <property type="component" value="Chromosome"/>
</dbReference>
<dbReference type="GO" id="GO:0005886">
    <property type="term" value="C:plasma membrane"/>
    <property type="evidence" value="ECO:0007669"/>
    <property type="project" value="UniProtKB-SubCell"/>
</dbReference>
<dbReference type="GO" id="GO:0071916">
    <property type="term" value="F:dipeptide transmembrane transporter activity"/>
    <property type="evidence" value="ECO:0007669"/>
    <property type="project" value="UniProtKB-UniRule"/>
</dbReference>
<dbReference type="GO" id="GO:0015333">
    <property type="term" value="F:peptide:proton symporter activity"/>
    <property type="evidence" value="ECO:0007669"/>
    <property type="project" value="UniProtKB-UniRule"/>
</dbReference>
<dbReference type="GO" id="GO:0042937">
    <property type="term" value="F:tripeptide transmembrane transporter activity"/>
    <property type="evidence" value="ECO:0007669"/>
    <property type="project" value="UniProtKB-UniRule"/>
</dbReference>
<dbReference type="GO" id="GO:0015031">
    <property type="term" value="P:protein transport"/>
    <property type="evidence" value="ECO:0007669"/>
    <property type="project" value="UniProtKB-KW"/>
</dbReference>
<dbReference type="CDD" id="cd17346">
    <property type="entry name" value="MFS_DtpA_like"/>
    <property type="match status" value="1"/>
</dbReference>
<dbReference type="FunFam" id="1.20.1250.20:FF:000017">
    <property type="entry name" value="Dipeptide and tripeptide permease A"/>
    <property type="match status" value="1"/>
</dbReference>
<dbReference type="Gene3D" id="1.20.1250.20">
    <property type="entry name" value="MFS general substrate transporter like domains"/>
    <property type="match status" value="1"/>
</dbReference>
<dbReference type="HAMAP" id="MF_01878">
    <property type="entry name" value="PTR2_DtpA_subfam"/>
    <property type="match status" value="1"/>
</dbReference>
<dbReference type="InterPro" id="IPR023517">
    <property type="entry name" value="AA/pep_transptr_DtpA"/>
</dbReference>
<dbReference type="InterPro" id="IPR005279">
    <property type="entry name" value="Dipep/tripep_permease"/>
</dbReference>
<dbReference type="InterPro" id="IPR036259">
    <property type="entry name" value="MFS_trans_sf"/>
</dbReference>
<dbReference type="InterPro" id="IPR050171">
    <property type="entry name" value="MFS_Transporters"/>
</dbReference>
<dbReference type="InterPro" id="IPR000109">
    <property type="entry name" value="POT_fam"/>
</dbReference>
<dbReference type="InterPro" id="IPR018456">
    <property type="entry name" value="PTR2_symporter_CS"/>
</dbReference>
<dbReference type="NCBIfam" id="NF007137">
    <property type="entry name" value="PRK09584.1"/>
    <property type="match status" value="1"/>
</dbReference>
<dbReference type="NCBIfam" id="TIGR00924">
    <property type="entry name" value="yjdL_sub1_fam"/>
    <property type="match status" value="1"/>
</dbReference>
<dbReference type="PANTHER" id="PTHR23517:SF15">
    <property type="entry name" value="PROTON-DEPENDENT OLIGOPEPTIDE FAMILY TRANSPORT PROTEIN"/>
    <property type="match status" value="1"/>
</dbReference>
<dbReference type="PANTHER" id="PTHR23517">
    <property type="entry name" value="RESISTANCE PROTEIN MDTM, PUTATIVE-RELATED-RELATED"/>
    <property type="match status" value="1"/>
</dbReference>
<dbReference type="Pfam" id="PF00854">
    <property type="entry name" value="PTR2"/>
    <property type="match status" value="1"/>
</dbReference>
<dbReference type="SUPFAM" id="SSF103473">
    <property type="entry name" value="MFS general substrate transporter"/>
    <property type="match status" value="1"/>
</dbReference>
<dbReference type="PROSITE" id="PS01022">
    <property type="entry name" value="PTR2_1"/>
    <property type="match status" value="1"/>
</dbReference>
<dbReference type="PROSITE" id="PS01023">
    <property type="entry name" value="PTR2_2"/>
    <property type="match status" value="1"/>
</dbReference>
<protein>
    <recommendedName>
        <fullName evidence="1">Dipeptide and tripeptide permease A</fullName>
    </recommendedName>
</protein>
<sequence>MTTSALNPLRQPKPFYLIFSIEFWERFGFYGLQGILAVYLVKALGLREADSFTLFSSFIALVYGLIAVGGWLGDKVLGTKRTILLGALVLTAGYAMVTASSEHISLLYLGMGTIAVGNGLFKANPSSLLSKCYEENDPRLDGAFTMYYMAINIGSLLSMLATPWLADQFGYAHAFALSVVGMLITVANFILMQGWVKNYGSDADFRTPRLSTWLAVLAGVVAACAAAALLLKHEIIANVVLAVLSIGVVGLYVKETLLLKGAERKKMIVAAILMLQATVFFVLYNQMPLSLNFFAIHNTEHMLFGIPVQPEQFQSLNPFWIMLASPLLALCYNKLGNRLPMPHKFAIGMVLCAGAFLVLPLGAKYANAQGLVSSNWMVLSYLLQSVGELLISGLGLAMVAQLVPQRLMGFIMGAWFLTSAASSVIAGWVAGLTAAPDNVTNPLATLEIYSRVFTQIGVVTGVIAVVTIIIAPWLHRMTLDEKPAHPEHEMALDAR</sequence>
<evidence type="ECO:0000255" key="1">
    <source>
        <dbReference type="HAMAP-Rule" id="MF_01878"/>
    </source>
</evidence>
<comment type="function">
    <text evidence="1">Proton-dependent permease that transports di- and tripeptides.</text>
</comment>
<comment type="subcellular location">
    <subcellularLocation>
        <location evidence="1">Cell inner membrane</location>
        <topology evidence="1">Multi-pass membrane protein</topology>
    </subcellularLocation>
</comment>
<comment type="similarity">
    <text evidence="1">Belongs to the major facilitator superfamily. Proton-dependent oligopeptide transporter (POT/PTR) (TC 2.A.17) family. DtpA subfamily.</text>
</comment>
<gene>
    <name evidence="1" type="primary">dtpA</name>
    <name type="ordered locus">CV_3755</name>
</gene>
<keyword id="KW-0997">Cell inner membrane</keyword>
<keyword id="KW-1003">Cell membrane</keyword>
<keyword id="KW-0472">Membrane</keyword>
<keyword id="KW-0571">Peptide transport</keyword>
<keyword id="KW-0653">Protein transport</keyword>
<keyword id="KW-1185">Reference proteome</keyword>
<keyword id="KW-0812">Transmembrane</keyword>
<keyword id="KW-1133">Transmembrane helix</keyword>
<keyword id="KW-0813">Transport</keyword>